<sequence length="222" mass="24854">MGQKVNPNGIRLGYIRDWRSTWYADSSRYATKLNEDIKVREFLHKKLAAAAVSKIQIERPAQNAKITIHTARSGIVIGKKGEDVEKLRAEVHKLMGIPVQINIEEVRKPEIDAKLVAESVAQQLEKRVMFRRAMKKAMQAAMKSGAKGIKIMVSGRLGGAEIARSEWARDGRVPLQTFRADVDYATAEALTTYGVIGVKVWIYKGEILPGQIAEKKNNKKRS</sequence>
<accession>Q5NHW2</accession>
<protein>
    <recommendedName>
        <fullName evidence="1">Small ribosomal subunit protein uS3</fullName>
    </recommendedName>
    <alternativeName>
        <fullName evidence="2">30S ribosomal protein S3</fullName>
    </alternativeName>
</protein>
<keyword id="KW-1185">Reference proteome</keyword>
<keyword id="KW-0687">Ribonucleoprotein</keyword>
<keyword id="KW-0689">Ribosomal protein</keyword>
<keyword id="KW-0694">RNA-binding</keyword>
<keyword id="KW-0699">rRNA-binding</keyword>
<organism>
    <name type="scientific">Francisella tularensis subsp. tularensis (strain SCHU S4 / Schu 4)</name>
    <dbReference type="NCBI Taxonomy" id="177416"/>
    <lineage>
        <taxon>Bacteria</taxon>
        <taxon>Pseudomonadati</taxon>
        <taxon>Pseudomonadota</taxon>
        <taxon>Gammaproteobacteria</taxon>
        <taxon>Thiotrichales</taxon>
        <taxon>Francisellaceae</taxon>
        <taxon>Francisella</taxon>
    </lineage>
</organism>
<name>RS3_FRATT</name>
<feature type="chain" id="PRO_0000130121" description="Small ribosomal subunit protein uS3">
    <location>
        <begin position="1"/>
        <end position="222"/>
    </location>
</feature>
<feature type="domain" description="KH type-2" evidence="1">
    <location>
        <begin position="39"/>
        <end position="107"/>
    </location>
</feature>
<comment type="function">
    <text evidence="1">Binds the lower part of the 30S subunit head. Binds mRNA in the 70S ribosome, positioning it for translation.</text>
</comment>
<comment type="subunit">
    <text evidence="1">Part of the 30S ribosomal subunit. Forms a tight complex with proteins S10 and S14.</text>
</comment>
<comment type="similarity">
    <text evidence="1">Belongs to the universal ribosomal protein uS3 family.</text>
</comment>
<proteinExistence type="inferred from homology"/>
<gene>
    <name evidence="1" type="primary">rpsC</name>
    <name type="ordered locus">FTT_0331</name>
</gene>
<dbReference type="EMBL" id="AJ749949">
    <property type="protein sequence ID" value="CAG44964.1"/>
    <property type="molecule type" value="Genomic_DNA"/>
</dbReference>
<dbReference type="RefSeq" id="WP_003028888.1">
    <property type="nucleotide sequence ID" value="NC_006570.2"/>
</dbReference>
<dbReference type="RefSeq" id="YP_169380.3">
    <property type="nucleotide sequence ID" value="NC_006570.2"/>
</dbReference>
<dbReference type="SMR" id="Q5NHW2"/>
<dbReference type="STRING" id="177416.FTT_0331"/>
<dbReference type="DNASU" id="3191974"/>
<dbReference type="EnsemblBacteria" id="CAG44964">
    <property type="protein sequence ID" value="CAG44964"/>
    <property type="gene ID" value="FTT_0331"/>
</dbReference>
<dbReference type="KEGG" id="ftu:FTT_0331"/>
<dbReference type="eggNOG" id="COG0092">
    <property type="taxonomic scope" value="Bacteria"/>
</dbReference>
<dbReference type="OrthoDB" id="9806396at2"/>
<dbReference type="Proteomes" id="UP000001174">
    <property type="component" value="Chromosome"/>
</dbReference>
<dbReference type="GO" id="GO:0022627">
    <property type="term" value="C:cytosolic small ribosomal subunit"/>
    <property type="evidence" value="ECO:0007669"/>
    <property type="project" value="TreeGrafter"/>
</dbReference>
<dbReference type="GO" id="GO:0003729">
    <property type="term" value="F:mRNA binding"/>
    <property type="evidence" value="ECO:0007669"/>
    <property type="project" value="UniProtKB-UniRule"/>
</dbReference>
<dbReference type="GO" id="GO:0019843">
    <property type="term" value="F:rRNA binding"/>
    <property type="evidence" value="ECO:0007669"/>
    <property type="project" value="UniProtKB-UniRule"/>
</dbReference>
<dbReference type="GO" id="GO:0003735">
    <property type="term" value="F:structural constituent of ribosome"/>
    <property type="evidence" value="ECO:0007669"/>
    <property type="project" value="InterPro"/>
</dbReference>
<dbReference type="GO" id="GO:0006412">
    <property type="term" value="P:translation"/>
    <property type="evidence" value="ECO:0007669"/>
    <property type="project" value="UniProtKB-UniRule"/>
</dbReference>
<dbReference type="CDD" id="cd02412">
    <property type="entry name" value="KH-II_30S_S3"/>
    <property type="match status" value="1"/>
</dbReference>
<dbReference type="FunFam" id="3.30.1140.32:FF:000001">
    <property type="entry name" value="30S ribosomal protein S3"/>
    <property type="match status" value="1"/>
</dbReference>
<dbReference type="FunFam" id="3.30.300.20:FF:000001">
    <property type="entry name" value="30S ribosomal protein S3"/>
    <property type="match status" value="1"/>
</dbReference>
<dbReference type="Gene3D" id="3.30.300.20">
    <property type="match status" value="1"/>
</dbReference>
<dbReference type="Gene3D" id="3.30.1140.32">
    <property type="entry name" value="Ribosomal protein S3, C-terminal domain"/>
    <property type="match status" value="1"/>
</dbReference>
<dbReference type="HAMAP" id="MF_01309_B">
    <property type="entry name" value="Ribosomal_uS3_B"/>
    <property type="match status" value="1"/>
</dbReference>
<dbReference type="InterPro" id="IPR004087">
    <property type="entry name" value="KH_dom"/>
</dbReference>
<dbReference type="InterPro" id="IPR015946">
    <property type="entry name" value="KH_dom-like_a/b"/>
</dbReference>
<dbReference type="InterPro" id="IPR004044">
    <property type="entry name" value="KH_dom_type_2"/>
</dbReference>
<dbReference type="InterPro" id="IPR009019">
    <property type="entry name" value="KH_sf_prok-type"/>
</dbReference>
<dbReference type="InterPro" id="IPR036419">
    <property type="entry name" value="Ribosomal_S3_C_sf"/>
</dbReference>
<dbReference type="InterPro" id="IPR005704">
    <property type="entry name" value="Ribosomal_uS3_bac-typ"/>
</dbReference>
<dbReference type="InterPro" id="IPR001351">
    <property type="entry name" value="Ribosomal_uS3_C"/>
</dbReference>
<dbReference type="InterPro" id="IPR018280">
    <property type="entry name" value="Ribosomal_uS3_CS"/>
</dbReference>
<dbReference type="NCBIfam" id="TIGR01009">
    <property type="entry name" value="rpsC_bact"/>
    <property type="match status" value="1"/>
</dbReference>
<dbReference type="PANTHER" id="PTHR11760">
    <property type="entry name" value="30S/40S RIBOSOMAL PROTEIN S3"/>
    <property type="match status" value="1"/>
</dbReference>
<dbReference type="PANTHER" id="PTHR11760:SF19">
    <property type="entry name" value="SMALL RIBOSOMAL SUBUNIT PROTEIN US3C"/>
    <property type="match status" value="1"/>
</dbReference>
<dbReference type="Pfam" id="PF07650">
    <property type="entry name" value="KH_2"/>
    <property type="match status" value="1"/>
</dbReference>
<dbReference type="Pfam" id="PF00189">
    <property type="entry name" value="Ribosomal_S3_C"/>
    <property type="match status" value="1"/>
</dbReference>
<dbReference type="SMART" id="SM00322">
    <property type="entry name" value="KH"/>
    <property type="match status" value="1"/>
</dbReference>
<dbReference type="SUPFAM" id="SSF54814">
    <property type="entry name" value="Prokaryotic type KH domain (KH-domain type II)"/>
    <property type="match status" value="1"/>
</dbReference>
<dbReference type="SUPFAM" id="SSF54821">
    <property type="entry name" value="Ribosomal protein S3 C-terminal domain"/>
    <property type="match status" value="1"/>
</dbReference>
<dbReference type="PROSITE" id="PS50823">
    <property type="entry name" value="KH_TYPE_2"/>
    <property type="match status" value="1"/>
</dbReference>
<dbReference type="PROSITE" id="PS00548">
    <property type="entry name" value="RIBOSOMAL_S3"/>
    <property type="match status" value="1"/>
</dbReference>
<reference key="1">
    <citation type="journal article" date="2005" name="Nat. Genet.">
        <title>The complete genome sequence of Francisella tularensis, the causative agent of tularemia.</title>
        <authorList>
            <person name="Larsson P."/>
            <person name="Oyston P.C.F."/>
            <person name="Chain P."/>
            <person name="Chu M.C."/>
            <person name="Duffield M."/>
            <person name="Fuxelius H.-H."/>
            <person name="Garcia E."/>
            <person name="Haelltorp G."/>
            <person name="Johansson D."/>
            <person name="Isherwood K.E."/>
            <person name="Karp P.D."/>
            <person name="Larsson E."/>
            <person name="Liu Y."/>
            <person name="Michell S."/>
            <person name="Prior J."/>
            <person name="Prior R."/>
            <person name="Malfatti S."/>
            <person name="Sjoestedt A."/>
            <person name="Svensson K."/>
            <person name="Thompson N."/>
            <person name="Vergez L."/>
            <person name="Wagg J.K."/>
            <person name="Wren B.W."/>
            <person name="Lindler L.E."/>
            <person name="Andersson S.G.E."/>
            <person name="Forsman M."/>
            <person name="Titball R.W."/>
        </authorList>
    </citation>
    <scope>NUCLEOTIDE SEQUENCE [LARGE SCALE GENOMIC DNA]</scope>
    <source>
        <strain>SCHU S4 / Schu 4</strain>
    </source>
</reference>
<evidence type="ECO:0000255" key="1">
    <source>
        <dbReference type="HAMAP-Rule" id="MF_01309"/>
    </source>
</evidence>
<evidence type="ECO:0000305" key="2"/>